<accession>Q8ZE20</accession>
<accession>Q0WEF3</accession>
<accession>Q74TK0</accession>
<accession>Q8D0L4</accession>
<reference key="1">
    <citation type="journal article" date="2001" name="Nature">
        <title>Genome sequence of Yersinia pestis, the causative agent of plague.</title>
        <authorList>
            <person name="Parkhill J."/>
            <person name="Wren B.W."/>
            <person name="Thomson N.R."/>
            <person name="Titball R.W."/>
            <person name="Holden M.T.G."/>
            <person name="Prentice M.B."/>
            <person name="Sebaihia M."/>
            <person name="James K.D."/>
            <person name="Churcher C.M."/>
            <person name="Mungall K.L."/>
            <person name="Baker S."/>
            <person name="Basham D."/>
            <person name="Bentley S.D."/>
            <person name="Brooks K."/>
            <person name="Cerdeno-Tarraga A.-M."/>
            <person name="Chillingworth T."/>
            <person name="Cronin A."/>
            <person name="Davies R.M."/>
            <person name="Davis P."/>
            <person name="Dougan G."/>
            <person name="Feltwell T."/>
            <person name="Hamlin N."/>
            <person name="Holroyd S."/>
            <person name="Jagels K."/>
            <person name="Karlyshev A.V."/>
            <person name="Leather S."/>
            <person name="Moule S."/>
            <person name="Oyston P.C.F."/>
            <person name="Quail M.A."/>
            <person name="Rutherford K.M."/>
            <person name="Simmonds M."/>
            <person name="Skelton J."/>
            <person name="Stevens K."/>
            <person name="Whitehead S."/>
            <person name="Barrell B.G."/>
        </authorList>
    </citation>
    <scope>NUCLEOTIDE SEQUENCE [LARGE SCALE GENOMIC DNA]</scope>
    <source>
        <strain>CO-92 / Biovar Orientalis</strain>
    </source>
</reference>
<reference key="2">
    <citation type="journal article" date="2002" name="J. Bacteriol.">
        <title>Genome sequence of Yersinia pestis KIM.</title>
        <authorList>
            <person name="Deng W."/>
            <person name="Burland V."/>
            <person name="Plunkett G. III"/>
            <person name="Boutin A."/>
            <person name="Mayhew G.F."/>
            <person name="Liss P."/>
            <person name="Perna N.T."/>
            <person name="Rose D.J."/>
            <person name="Mau B."/>
            <person name="Zhou S."/>
            <person name="Schwartz D.C."/>
            <person name="Fetherston J.D."/>
            <person name="Lindler L.E."/>
            <person name="Brubaker R.R."/>
            <person name="Plano G.V."/>
            <person name="Straley S.C."/>
            <person name="McDonough K.A."/>
            <person name="Nilles M.L."/>
            <person name="Matson J.S."/>
            <person name="Blattner F.R."/>
            <person name="Perry R.D."/>
        </authorList>
    </citation>
    <scope>NUCLEOTIDE SEQUENCE [LARGE SCALE GENOMIC DNA]</scope>
    <source>
        <strain>KIM10+ / Biovar Mediaevalis</strain>
    </source>
</reference>
<reference key="3">
    <citation type="journal article" date="2004" name="DNA Res.">
        <title>Complete genome sequence of Yersinia pestis strain 91001, an isolate avirulent to humans.</title>
        <authorList>
            <person name="Song Y."/>
            <person name="Tong Z."/>
            <person name="Wang J."/>
            <person name="Wang L."/>
            <person name="Guo Z."/>
            <person name="Han Y."/>
            <person name="Zhang J."/>
            <person name="Pei D."/>
            <person name="Zhou D."/>
            <person name="Qin H."/>
            <person name="Pang X."/>
            <person name="Han Y."/>
            <person name="Zhai J."/>
            <person name="Li M."/>
            <person name="Cui B."/>
            <person name="Qi Z."/>
            <person name="Jin L."/>
            <person name="Dai R."/>
            <person name="Chen F."/>
            <person name="Li S."/>
            <person name="Ye C."/>
            <person name="Du Z."/>
            <person name="Lin W."/>
            <person name="Wang J."/>
            <person name="Yu J."/>
            <person name="Yang H."/>
            <person name="Wang J."/>
            <person name="Huang P."/>
            <person name="Yang R."/>
        </authorList>
    </citation>
    <scope>NUCLEOTIDE SEQUENCE [LARGE SCALE GENOMIC DNA]</scope>
    <source>
        <strain>91001 / Biovar Mediaevalis</strain>
    </source>
</reference>
<organism>
    <name type="scientific">Yersinia pestis</name>
    <dbReference type="NCBI Taxonomy" id="632"/>
    <lineage>
        <taxon>Bacteria</taxon>
        <taxon>Pseudomonadati</taxon>
        <taxon>Pseudomonadota</taxon>
        <taxon>Gammaproteobacteria</taxon>
        <taxon>Enterobacterales</taxon>
        <taxon>Yersiniaceae</taxon>
        <taxon>Yersinia</taxon>
    </lineage>
</organism>
<dbReference type="EC" id="6.1.1.1" evidence="1"/>
<dbReference type="EMBL" id="AL590842">
    <property type="protein sequence ID" value="CAL20997.1"/>
    <property type="molecule type" value="Genomic_DNA"/>
</dbReference>
<dbReference type="EMBL" id="AE009952">
    <property type="protein sequence ID" value="AAM85532.1"/>
    <property type="status" value="ALT_INIT"/>
    <property type="molecule type" value="Genomic_DNA"/>
</dbReference>
<dbReference type="EMBL" id="AE017042">
    <property type="protein sequence ID" value="AAS62363.1"/>
    <property type="status" value="ALT_INIT"/>
    <property type="molecule type" value="Genomic_DNA"/>
</dbReference>
<dbReference type="PIR" id="AB0289">
    <property type="entry name" value="AB0289"/>
</dbReference>
<dbReference type="RefSeq" id="WP_002210960.1">
    <property type="nucleotide sequence ID" value="NZ_WUCM01000049.1"/>
</dbReference>
<dbReference type="RefSeq" id="YP_002347335.1">
    <property type="nucleotide sequence ID" value="NC_003143.1"/>
</dbReference>
<dbReference type="SMR" id="Q8ZE20"/>
<dbReference type="IntAct" id="Q8ZE20">
    <property type="interactions" value="5"/>
</dbReference>
<dbReference type="STRING" id="214092.YPO2369"/>
<dbReference type="PaxDb" id="214092-YPO2369"/>
<dbReference type="DNASU" id="1146913"/>
<dbReference type="EnsemblBacteria" id="AAS62363">
    <property type="protein sequence ID" value="AAS62363"/>
    <property type="gene ID" value="YP_2155"/>
</dbReference>
<dbReference type="GeneID" id="57976306"/>
<dbReference type="KEGG" id="ype:YPO2369"/>
<dbReference type="KEGG" id="ypk:y1966"/>
<dbReference type="KEGG" id="ypm:YP_2155"/>
<dbReference type="PATRIC" id="fig|214092.21.peg.2776"/>
<dbReference type="eggNOG" id="COG0162">
    <property type="taxonomic scope" value="Bacteria"/>
</dbReference>
<dbReference type="HOGENOM" id="CLU_024003_0_3_6"/>
<dbReference type="OMA" id="YMMAKDS"/>
<dbReference type="OrthoDB" id="9804243at2"/>
<dbReference type="Proteomes" id="UP000000815">
    <property type="component" value="Chromosome"/>
</dbReference>
<dbReference type="Proteomes" id="UP000001019">
    <property type="component" value="Chromosome"/>
</dbReference>
<dbReference type="Proteomes" id="UP000002490">
    <property type="component" value="Chromosome"/>
</dbReference>
<dbReference type="GO" id="GO:0005829">
    <property type="term" value="C:cytosol"/>
    <property type="evidence" value="ECO:0000318"/>
    <property type="project" value="GO_Central"/>
</dbReference>
<dbReference type="GO" id="GO:0005524">
    <property type="term" value="F:ATP binding"/>
    <property type="evidence" value="ECO:0007669"/>
    <property type="project" value="UniProtKB-UniRule"/>
</dbReference>
<dbReference type="GO" id="GO:0003723">
    <property type="term" value="F:RNA binding"/>
    <property type="evidence" value="ECO:0007669"/>
    <property type="project" value="UniProtKB-KW"/>
</dbReference>
<dbReference type="GO" id="GO:0004831">
    <property type="term" value="F:tyrosine-tRNA ligase activity"/>
    <property type="evidence" value="ECO:0000318"/>
    <property type="project" value="GO_Central"/>
</dbReference>
<dbReference type="GO" id="GO:0043039">
    <property type="term" value="P:tRNA aminoacylation"/>
    <property type="evidence" value="ECO:0000318"/>
    <property type="project" value="GO_Central"/>
</dbReference>
<dbReference type="GO" id="GO:0006437">
    <property type="term" value="P:tyrosyl-tRNA aminoacylation"/>
    <property type="evidence" value="ECO:0007669"/>
    <property type="project" value="UniProtKB-UniRule"/>
</dbReference>
<dbReference type="CDD" id="cd00165">
    <property type="entry name" value="S4"/>
    <property type="match status" value="1"/>
</dbReference>
<dbReference type="CDD" id="cd00805">
    <property type="entry name" value="TyrRS_core"/>
    <property type="match status" value="1"/>
</dbReference>
<dbReference type="FunFam" id="1.10.240.10:FF:000001">
    <property type="entry name" value="Tyrosine--tRNA ligase"/>
    <property type="match status" value="1"/>
</dbReference>
<dbReference type="FunFam" id="3.10.290.10:FF:000007">
    <property type="entry name" value="Tyrosine--tRNA ligase"/>
    <property type="match status" value="1"/>
</dbReference>
<dbReference type="FunFam" id="3.40.50.620:FF:000008">
    <property type="entry name" value="Tyrosine--tRNA ligase"/>
    <property type="match status" value="1"/>
</dbReference>
<dbReference type="Gene3D" id="3.40.50.620">
    <property type="entry name" value="HUPs"/>
    <property type="match status" value="1"/>
</dbReference>
<dbReference type="Gene3D" id="3.10.290.10">
    <property type="entry name" value="RNA-binding S4 domain"/>
    <property type="match status" value="1"/>
</dbReference>
<dbReference type="Gene3D" id="1.10.240.10">
    <property type="entry name" value="Tyrosyl-Transfer RNA Synthetase"/>
    <property type="match status" value="1"/>
</dbReference>
<dbReference type="HAMAP" id="MF_02006">
    <property type="entry name" value="Tyr_tRNA_synth_type1"/>
    <property type="match status" value="1"/>
</dbReference>
<dbReference type="InterPro" id="IPR001412">
    <property type="entry name" value="aa-tRNA-synth_I_CS"/>
</dbReference>
<dbReference type="InterPro" id="IPR002305">
    <property type="entry name" value="aa-tRNA-synth_Ic"/>
</dbReference>
<dbReference type="InterPro" id="IPR014729">
    <property type="entry name" value="Rossmann-like_a/b/a_fold"/>
</dbReference>
<dbReference type="InterPro" id="IPR002942">
    <property type="entry name" value="S4_RNA-bd"/>
</dbReference>
<dbReference type="InterPro" id="IPR036986">
    <property type="entry name" value="S4_RNA-bd_sf"/>
</dbReference>
<dbReference type="InterPro" id="IPR054608">
    <property type="entry name" value="SYY-like_C"/>
</dbReference>
<dbReference type="InterPro" id="IPR002307">
    <property type="entry name" value="Tyr-tRNA-ligase"/>
</dbReference>
<dbReference type="InterPro" id="IPR024088">
    <property type="entry name" value="Tyr-tRNA-ligase_bac-type"/>
</dbReference>
<dbReference type="InterPro" id="IPR024107">
    <property type="entry name" value="Tyr-tRNA-ligase_bac_1"/>
</dbReference>
<dbReference type="NCBIfam" id="TIGR00234">
    <property type="entry name" value="tyrS"/>
    <property type="match status" value="1"/>
</dbReference>
<dbReference type="PANTHER" id="PTHR11766:SF0">
    <property type="entry name" value="TYROSINE--TRNA LIGASE, MITOCHONDRIAL"/>
    <property type="match status" value="1"/>
</dbReference>
<dbReference type="PANTHER" id="PTHR11766">
    <property type="entry name" value="TYROSYL-TRNA SYNTHETASE"/>
    <property type="match status" value="1"/>
</dbReference>
<dbReference type="Pfam" id="PF22421">
    <property type="entry name" value="SYY_C-terminal"/>
    <property type="match status" value="1"/>
</dbReference>
<dbReference type="Pfam" id="PF00579">
    <property type="entry name" value="tRNA-synt_1b"/>
    <property type="match status" value="1"/>
</dbReference>
<dbReference type="PRINTS" id="PR01040">
    <property type="entry name" value="TRNASYNTHTYR"/>
</dbReference>
<dbReference type="SMART" id="SM00363">
    <property type="entry name" value="S4"/>
    <property type="match status" value="1"/>
</dbReference>
<dbReference type="SUPFAM" id="SSF55174">
    <property type="entry name" value="Alpha-L RNA-binding motif"/>
    <property type="match status" value="1"/>
</dbReference>
<dbReference type="SUPFAM" id="SSF52374">
    <property type="entry name" value="Nucleotidylyl transferase"/>
    <property type="match status" value="1"/>
</dbReference>
<dbReference type="PROSITE" id="PS00178">
    <property type="entry name" value="AA_TRNA_LIGASE_I"/>
    <property type="match status" value="1"/>
</dbReference>
<dbReference type="PROSITE" id="PS50889">
    <property type="entry name" value="S4"/>
    <property type="match status" value="1"/>
</dbReference>
<protein>
    <recommendedName>
        <fullName evidence="1">Tyrosine--tRNA ligase</fullName>
        <ecNumber evidence="1">6.1.1.1</ecNumber>
    </recommendedName>
    <alternativeName>
        <fullName evidence="1">Tyrosyl-tRNA synthetase</fullName>
        <shortName evidence="1">TyrRS</shortName>
    </alternativeName>
</protein>
<sequence length="424" mass="47158">MTSSNLIKQLQERGLVAQVTDEDALAERLAQGPISLYCGFDPTADSLHLGHLVPLLCLKRFQLAGHRPVALVGGATGMIGDPSFKASERKLNTEDTVNEWVEKIRHQVSPFLDFDCGENSAIAANNYDWFGGMNVLTFLRDIGKHFSVNQMINKEAVKQRLNRDDSGISFTEFSYNLLQAYDFACLNKNHGVALQIGGSDQWGNITSGIDLTRRLHQQQVYGLTVPLITKADGTKFGKTEGGAVWLDPKKTSPYKFYQFWINTADADVYRFLKFFTFMSLEEINALEEEDKNSGKAPRAQYVLAENVTGMVHGPEGLAAAKRITDSLFSGDLHDMTEADFAQLAQDGMPTVELNRDADLQQALVNAELVPSRGQARTMIGSNAVAINGEKQADPEYVFTDADRLFGRYTLLRRGKKHYCLISWL</sequence>
<name>SYY_YERPE</name>
<feature type="chain" id="PRO_0000234816" description="Tyrosine--tRNA ligase">
    <location>
        <begin position="1"/>
        <end position="424"/>
    </location>
</feature>
<feature type="domain" description="S4 RNA-binding" evidence="1">
    <location>
        <begin position="357"/>
        <end position="414"/>
    </location>
</feature>
<feature type="short sequence motif" description="'HIGH' region">
    <location>
        <begin position="42"/>
        <end position="51"/>
    </location>
</feature>
<feature type="short sequence motif" description="'KMSKS' region">
    <location>
        <begin position="235"/>
        <end position="239"/>
    </location>
</feature>
<feature type="binding site" evidence="1">
    <location>
        <position position="37"/>
    </location>
    <ligand>
        <name>L-tyrosine</name>
        <dbReference type="ChEBI" id="CHEBI:58315"/>
    </ligand>
</feature>
<feature type="binding site" evidence="1">
    <location>
        <position position="175"/>
    </location>
    <ligand>
        <name>L-tyrosine</name>
        <dbReference type="ChEBI" id="CHEBI:58315"/>
    </ligand>
</feature>
<feature type="binding site" evidence="1">
    <location>
        <position position="179"/>
    </location>
    <ligand>
        <name>L-tyrosine</name>
        <dbReference type="ChEBI" id="CHEBI:58315"/>
    </ligand>
</feature>
<feature type="binding site" evidence="1">
    <location>
        <position position="238"/>
    </location>
    <ligand>
        <name>ATP</name>
        <dbReference type="ChEBI" id="CHEBI:30616"/>
    </ligand>
</feature>
<keyword id="KW-0030">Aminoacyl-tRNA synthetase</keyword>
<keyword id="KW-0067">ATP-binding</keyword>
<keyword id="KW-0963">Cytoplasm</keyword>
<keyword id="KW-0436">Ligase</keyword>
<keyword id="KW-0547">Nucleotide-binding</keyword>
<keyword id="KW-0648">Protein biosynthesis</keyword>
<keyword id="KW-1185">Reference proteome</keyword>
<keyword id="KW-0694">RNA-binding</keyword>
<comment type="function">
    <text evidence="1">Catalyzes the attachment of tyrosine to tRNA(Tyr) in a two-step reaction: tyrosine is first activated by ATP to form Tyr-AMP and then transferred to the acceptor end of tRNA(Tyr).</text>
</comment>
<comment type="catalytic activity">
    <reaction evidence="1">
        <text>tRNA(Tyr) + L-tyrosine + ATP = L-tyrosyl-tRNA(Tyr) + AMP + diphosphate + H(+)</text>
        <dbReference type="Rhea" id="RHEA:10220"/>
        <dbReference type="Rhea" id="RHEA-COMP:9706"/>
        <dbReference type="Rhea" id="RHEA-COMP:9707"/>
        <dbReference type="ChEBI" id="CHEBI:15378"/>
        <dbReference type="ChEBI" id="CHEBI:30616"/>
        <dbReference type="ChEBI" id="CHEBI:33019"/>
        <dbReference type="ChEBI" id="CHEBI:58315"/>
        <dbReference type="ChEBI" id="CHEBI:78442"/>
        <dbReference type="ChEBI" id="CHEBI:78536"/>
        <dbReference type="ChEBI" id="CHEBI:456215"/>
        <dbReference type="EC" id="6.1.1.1"/>
    </reaction>
</comment>
<comment type="subunit">
    <text evidence="1">Homodimer.</text>
</comment>
<comment type="subcellular location">
    <subcellularLocation>
        <location evidence="1">Cytoplasm</location>
    </subcellularLocation>
</comment>
<comment type="similarity">
    <text evidence="1">Belongs to the class-I aminoacyl-tRNA synthetase family. TyrS type 1 subfamily.</text>
</comment>
<comment type="sequence caution" evidence="2">
    <conflict type="erroneous initiation">
        <sequence resource="EMBL-CDS" id="AAM85532"/>
    </conflict>
</comment>
<comment type="sequence caution" evidence="2">
    <conflict type="erroneous initiation">
        <sequence resource="EMBL-CDS" id="AAS62363"/>
    </conflict>
</comment>
<evidence type="ECO:0000255" key="1">
    <source>
        <dbReference type="HAMAP-Rule" id="MF_02006"/>
    </source>
</evidence>
<evidence type="ECO:0000305" key="2"/>
<gene>
    <name evidence="1" type="primary">tyrS</name>
    <name type="ordered locus">YPO2369</name>
    <name type="ordered locus">y1966</name>
    <name type="ordered locus">YP_2155</name>
</gene>
<proteinExistence type="inferred from homology"/>